<feature type="chain" id="PRO_0000096877" description="Nonsense-mediated decay protein 4">
    <location>
        <begin position="1"/>
        <end position="416"/>
    </location>
</feature>
<feature type="region of interest" description="Disordered" evidence="2">
    <location>
        <begin position="1"/>
        <end position="21"/>
    </location>
</feature>
<feature type="region of interest" description="Disordered" evidence="2">
    <location>
        <begin position="195"/>
        <end position="218"/>
    </location>
</feature>
<feature type="region of interest" description="Disordered" evidence="2">
    <location>
        <begin position="356"/>
        <end position="393"/>
    </location>
</feature>
<feature type="compositionally biased region" description="Basic and acidic residues" evidence="2">
    <location>
        <begin position="12"/>
        <end position="21"/>
    </location>
</feature>
<feature type="compositionally biased region" description="Basic residues" evidence="2">
    <location>
        <begin position="360"/>
        <end position="375"/>
    </location>
</feature>
<gene>
    <name type="primary">NMD4</name>
    <name type="ordered locus">DEHA2G03080g</name>
</gene>
<proteinExistence type="inferred from homology"/>
<evidence type="ECO:0000250" key="1"/>
<evidence type="ECO:0000256" key="2">
    <source>
        <dbReference type="SAM" id="MobiDB-lite"/>
    </source>
</evidence>
<name>NMD4_DEBHA</name>
<protein>
    <recommendedName>
        <fullName>Nonsense-mediated decay protein 4</fullName>
    </recommendedName>
</protein>
<keyword id="KW-0963">Cytoplasm</keyword>
<keyword id="KW-0866">Nonsense-mediated mRNA decay</keyword>
<keyword id="KW-1185">Reference proteome</keyword>
<comment type="function">
    <text evidence="1">Involved in nonsense-mediated decay of mRNAs containing premature stop codons.</text>
</comment>
<comment type="subcellular location">
    <subcellularLocation>
        <location evidence="1">Cytoplasm</location>
    </subcellularLocation>
</comment>
<accession>Q6BJE2</accession>
<reference key="1">
    <citation type="journal article" date="2004" name="Nature">
        <title>Genome evolution in yeasts.</title>
        <authorList>
            <person name="Dujon B."/>
            <person name="Sherman D."/>
            <person name="Fischer G."/>
            <person name="Durrens P."/>
            <person name="Casaregola S."/>
            <person name="Lafontaine I."/>
            <person name="de Montigny J."/>
            <person name="Marck C."/>
            <person name="Neuveglise C."/>
            <person name="Talla E."/>
            <person name="Goffard N."/>
            <person name="Frangeul L."/>
            <person name="Aigle M."/>
            <person name="Anthouard V."/>
            <person name="Babour A."/>
            <person name="Barbe V."/>
            <person name="Barnay S."/>
            <person name="Blanchin S."/>
            <person name="Beckerich J.-M."/>
            <person name="Beyne E."/>
            <person name="Bleykasten C."/>
            <person name="Boisrame A."/>
            <person name="Boyer J."/>
            <person name="Cattolico L."/>
            <person name="Confanioleri F."/>
            <person name="de Daruvar A."/>
            <person name="Despons L."/>
            <person name="Fabre E."/>
            <person name="Fairhead C."/>
            <person name="Ferry-Dumazet H."/>
            <person name="Groppi A."/>
            <person name="Hantraye F."/>
            <person name="Hennequin C."/>
            <person name="Jauniaux N."/>
            <person name="Joyet P."/>
            <person name="Kachouri R."/>
            <person name="Kerrest A."/>
            <person name="Koszul R."/>
            <person name="Lemaire M."/>
            <person name="Lesur I."/>
            <person name="Ma L."/>
            <person name="Muller H."/>
            <person name="Nicaud J.-M."/>
            <person name="Nikolski M."/>
            <person name="Oztas S."/>
            <person name="Ozier-Kalogeropoulos O."/>
            <person name="Pellenz S."/>
            <person name="Potier S."/>
            <person name="Richard G.-F."/>
            <person name="Straub M.-L."/>
            <person name="Suleau A."/>
            <person name="Swennen D."/>
            <person name="Tekaia F."/>
            <person name="Wesolowski-Louvel M."/>
            <person name="Westhof E."/>
            <person name="Wirth B."/>
            <person name="Zeniou-Meyer M."/>
            <person name="Zivanovic Y."/>
            <person name="Bolotin-Fukuhara M."/>
            <person name="Thierry A."/>
            <person name="Bouchier C."/>
            <person name="Caudron B."/>
            <person name="Scarpelli C."/>
            <person name="Gaillardin C."/>
            <person name="Weissenbach J."/>
            <person name="Wincker P."/>
            <person name="Souciet J.-L."/>
        </authorList>
    </citation>
    <scope>NUCLEOTIDE SEQUENCE [LARGE SCALE GENOMIC DNA]</scope>
    <source>
        <strain>ATCC 36239 / CBS 767 / BCRC 21394 / JCM 1990 / NBRC 0083 / IGC 2968</strain>
    </source>
</reference>
<sequence length="416" mass="48079">MSLYPYNSDEDEARKNSNYHDFDELVPSEEIENASKPSDTFPGRKSRNINVILDHSAFVRGIGNIKRWFNQEYIKAHIDPNADEEIYLNIYIPSYTLHEFDYVKKGTSMMATNAREAIRFIDKIFEKELNGEDETDPMNPDSKPGKKSIIYDLYIESPNESGPSWSECLNYKVHSPKIKEFPNFKTKFDSNLIGQHPIPQGESLESHNSFDETNYNNSSAYKQNNKLNDIQYENSQSYQNALANADELAEMPTRLRYLIRSCIYKRFIERKSFNSPLEEWKLVTEDPITKVWAKSFGIDCMNVNEAELLIFQSYDINQYQLYDPRHTFSVDDESHAPNSILQNTIDTTLYSYTKIDRPSKSKNKNKNKNTKKSTKPKQINGVVSDGCTGANGDFVKKERFDAINYAPRGTGDLWKP</sequence>
<organism>
    <name type="scientific">Debaryomyces hansenii (strain ATCC 36239 / CBS 767 / BCRC 21394 / JCM 1990 / NBRC 0083 / IGC 2968)</name>
    <name type="common">Yeast</name>
    <name type="synonym">Torulaspora hansenii</name>
    <dbReference type="NCBI Taxonomy" id="284592"/>
    <lineage>
        <taxon>Eukaryota</taxon>
        <taxon>Fungi</taxon>
        <taxon>Dikarya</taxon>
        <taxon>Ascomycota</taxon>
        <taxon>Saccharomycotina</taxon>
        <taxon>Pichiomycetes</taxon>
        <taxon>Debaryomycetaceae</taxon>
        <taxon>Debaryomyces</taxon>
    </lineage>
</organism>
<dbReference type="EMBL" id="CR382139">
    <property type="protein sequence ID" value="CAG90127.1"/>
    <property type="molecule type" value="Genomic_DNA"/>
</dbReference>
<dbReference type="RefSeq" id="XP_461679.1">
    <property type="nucleotide sequence ID" value="XM_461679.1"/>
</dbReference>
<dbReference type="SMR" id="Q6BJE2"/>
<dbReference type="FunCoup" id="Q6BJE2">
    <property type="interactions" value="37"/>
</dbReference>
<dbReference type="STRING" id="284592.Q6BJE2"/>
<dbReference type="GeneID" id="2904547"/>
<dbReference type="KEGG" id="dha:DEHA2G03080g"/>
<dbReference type="VEuPathDB" id="FungiDB:DEHA2G03080g"/>
<dbReference type="eggNOG" id="ENOG502S5VM">
    <property type="taxonomic scope" value="Eukaryota"/>
</dbReference>
<dbReference type="HOGENOM" id="CLU_049919_0_0_1"/>
<dbReference type="InParanoid" id="Q6BJE2"/>
<dbReference type="OMA" id="PITKIWA"/>
<dbReference type="OrthoDB" id="5361617at2759"/>
<dbReference type="Proteomes" id="UP000000599">
    <property type="component" value="Chromosome G"/>
</dbReference>
<dbReference type="GO" id="GO:0005737">
    <property type="term" value="C:cytoplasm"/>
    <property type="evidence" value="ECO:0007669"/>
    <property type="project" value="UniProtKB-SubCell"/>
</dbReference>
<dbReference type="GO" id="GO:0000184">
    <property type="term" value="P:nuclear-transcribed mRNA catabolic process, nonsense-mediated decay"/>
    <property type="evidence" value="ECO:0007669"/>
    <property type="project" value="UniProtKB-KW"/>
</dbReference>
<dbReference type="Gene3D" id="3.40.50.1010">
    <property type="entry name" value="5'-nuclease"/>
    <property type="match status" value="1"/>
</dbReference>
<dbReference type="InterPro" id="IPR002716">
    <property type="entry name" value="PIN_dom"/>
</dbReference>
<dbReference type="Pfam" id="PF13638">
    <property type="entry name" value="PIN_4"/>
    <property type="match status" value="1"/>
</dbReference>